<accession>A7TQS2</accession>
<gene>
    <name evidence="1" type="primary">SHE10</name>
    <name type="ORF">Kpol_460p6</name>
</gene>
<sequence length="592" mass="70748">MRFFKRFLLTLTVFIYTLRYLHCNADYALDESNCTCLRNFCQYSNANYWNDYLIEHNEYYKTVINPVATENYNLYIKPYCLIAREKSNLYYKLYLEEHVNNTLNNKYVARVAEEFLVFKESHCHYWKNHSVKYHDWIKLLHEKTENYIKNIKVKFNSLHDNLKGQFDEMKQDIHKNVKTLTSTLYTSTSTEETLVPSPASHSIDTKVEEVSGSHLIDNKKTDNTADEIQTTPELSEWELAQDEFNAWFKLVDTKSSKACKFLDQEVEDYLNEKIEPWELELNEKINHFRKEIHLQFNKLVKNIEDIDCTSEVDGETGEVIYFAKNGETQLSQYITRPFISSLFKEIESKFQALENNISTNLTNTIDELDKNIQEIHEHHVELYEEWGDIMISEWSKRMAYIEVVAAHYDSESDEDSSQEYWRNFLKLKKKVISIRDNLVEHHIKVTPLNQFLANVQNELNNITKESNEYLLVLRAKANLLFDEREKREEEEHNQKIILQRMENERIQSEQEERIKSLQKEEEEAEKLLEKEIQEKARKQEEARKQEEARKQEEARKQEEARKQEEARKQEEVRKQEEARKQMGSPPPPQQQQ</sequence>
<keyword id="KW-0175">Coiled coil</keyword>
<keyword id="KW-0496">Mitochondrion</keyword>
<keyword id="KW-1185">Reference proteome</keyword>
<keyword id="KW-0687">Ribonucleoprotein</keyword>
<keyword id="KW-0732">Signal</keyword>
<keyword id="KW-0749">Sporulation</keyword>
<comment type="function">
    <text evidence="1">Involved in spore wall assembly. May be a component of the mitochondrial RNase MRP (MtMRP), a ribonucleoprotein endoribonuclease involved in the cleaving RNA transcripts to generate primers for DNA replication in mitochondria.</text>
</comment>
<comment type="subunit">
    <text evidence="1">Component of the mitochondria-localized RNase mitochondrial RNA-processing (RNase MRP) composed of one single RNA encoded by the NME1 gene and at least 31 proteins. Absent in the nucleus-localized RNase MRP (NuMRP).</text>
</comment>
<comment type="subcellular location">
    <subcellularLocation>
        <location evidence="1">Mitochondrion</location>
    </subcellularLocation>
</comment>
<comment type="similarity">
    <text evidence="4">Belongs to the SHE10 family.</text>
</comment>
<reference key="1">
    <citation type="journal article" date="2007" name="Proc. Natl. Acad. Sci. U.S.A.">
        <title>Independent sorting-out of thousands of duplicated gene pairs in two yeast species descended from a whole-genome duplication.</title>
        <authorList>
            <person name="Scannell D.R."/>
            <person name="Frank A.C."/>
            <person name="Conant G.C."/>
            <person name="Byrne K.P."/>
            <person name="Woolfit M."/>
            <person name="Wolfe K.H."/>
        </authorList>
    </citation>
    <scope>NUCLEOTIDE SEQUENCE [LARGE SCALE GENOMIC DNA]</scope>
    <source>
        <strain>ATCC 22028 / DSM 70294 / BCRC 21397 / CBS 2163 / NBRC 10782 / NRRL Y-8283 / UCD 57-17</strain>
    </source>
</reference>
<protein>
    <recommendedName>
        <fullName evidence="1">Outer spore wall assembly protein SHE10</fullName>
    </recommendedName>
    <alternativeName>
        <fullName evidence="1">Sensitivity to high expression protein 10</fullName>
    </alternativeName>
</protein>
<evidence type="ECO:0000250" key="1">
    <source>
        <dbReference type="UniProtKB" id="P53075"/>
    </source>
</evidence>
<evidence type="ECO:0000255" key="2"/>
<evidence type="ECO:0000256" key="3">
    <source>
        <dbReference type="SAM" id="MobiDB-lite"/>
    </source>
</evidence>
<evidence type="ECO:0000305" key="4"/>
<proteinExistence type="inferred from homology"/>
<dbReference type="EMBL" id="DS480463">
    <property type="protein sequence ID" value="EDO15371.1"/>
    <property type="molecule type" value="Genomic_DNA"/>
</dbReference>
<dbReference type="RefSeq" id="XP_001643229.1">
    <property type="nucleotide sequence ID" value="XM_001643179.1"/>
</dbReference>
<dbReference type="SMR" id="A7TQS2"/>
<dbReference type="FunCoup" id="A7TQS2">
    <property type="interactions" value="31"/>
</dbReference>
<dbReference type="STRING" id="436907.A7TQS2"/>
<dbReference type="GeneID" id="5543465"/>
<dbReference type="KEGG" id="vpo:Kpol_460p6"/>
<dbReference type="eggNOG" id="ENOG502QT2T">
    <property type="taxonomic scope" value="Eukaryota"/>
</dbReference>
<dbReference type="HOGENOM" id="CLU_023952_1_0_1"/>
<dbReference type="InParanoid" id="A7TQS2"/>
<dbReference type="OMA" id="MINEWSK"/>
<dbReference type="OrthoDB" id="3260408at2759"/>
<dbReference type="PhylomeDB" id="A7TQS2"/>
<dbReference type="Proteomes" id="UP000000267">
    <property type="component" value="Unassembled WGS sequence"/>
</dbReference>
<dbReference type="GO" id="GO:0005739">
    <property type="term" value="C:mitochondrion"/>
    <property type="evidence" value="ECO:0007669"/>
    <property type="project" value="UniProtKB-SubCell"/>
</dbReference>
<dbReference type="GO" id="GO:1990904">
    <property type="term" value="C:ribonucleoprotein complex"/>
    <property type="evidence" value="ECO:0007669"/>
    <property type="project" value="UniProtKB-KW"/>
</dbReference>
<dbReference type="GO" id="GO:0030435">
    <property type="term" value="P:sporulation resulting in formation of a cellular spore"/>
    <property type="evidence" value="ECO:0007669"/>
    <property type="project" value="UniProtKB-KW"/>
</dbReference>
<name>SHE10_VANPO</name>
<feature type="signal peptide" evidence="2">
    <location>
        <begin position="1"/>
        <end position="23"/>
    </location>
</feature>
<feature type="chain" id="PRO_0000408910" description="Outer spore wall assembly protein SHE10">
    <location>
        <begin position="24"/>
        <end position="592"/>
    </location>
</feature>
<feature type="region of interest" description="Disordered" evidence="3">
    <location>
        <begin position="507"/>
        <end position="592"/>
    </location>
</feature>
<feature type="coiled-coil region" evidence="2">
    <location>
        <begin position="354"/>
        <end position="385"/>
    </location>
</feature>
<feature type="coiled-coil region" evidence="2">
    <location>
        <begin position="448"/>
        <end position="583"/>
    </location>
</feature>
<feature type="compositionally biased region" description="Basic and acidic residues" evidence="3">
    <location>
        <begin position="507"/>
        <end position="580"/>
    </location>
</feature>
<organism>
    <name type="scientific">Vanderwaltozyma polyspora (strain ATCC 22028 / DSM 70294 / BCRC 21397 / CBS 2163 / NBRC 10782 / NRRL Y-8283 / UCD 57-17)</name>
    <name type="common">Kluyveromyces polysporus</name>
    <dbReference type="NCBI Taxonomy" id="436907"/>
    <lineage>
        <taxon>Eukaryota</taxon>
        <taxon>Fungi</taxon>
        <taxon>Dikarya</taxon>
        <taxon>Ascomycota</taxon>
        <taxon>Saccharomycotina</taxon>
        <taxon>Saccharomycetes</taxon>
        <taxon>Saccharomycetales</taxon>
        <taxon>Saccharomycetaceae</taxon>
        <taxon>Vanderwaltozyma</taxon>
    </lineage>
</organism>